<proteinExistence type="inferred from homology"/>
<gene>
    <name evidence="1" type="primary">glpK</name>
    <name type="ordered locus">Shal_0444</name>
</gene>
<protein>
    <recommendedName>
        <fullName evidence="1">Glycerol kinase</fullName>
        <ecNumber evidence="1">2.7.1.30</ecNumber>
    </recommendedName>
    <alternativeName>
        <fullName evidence="1">ATP:glycerol 3-phosphotransferase</fullName>
    </alternativeName>
    <alternativeName>
        <fullName evidence="1">Glycerokinase</fullName>
        <shortName evidence="1">GK</shortName>
    </alternativeName>
</protein>
<sequence length="493" mass="54202">MSKKYIIALDQGTTSSRAIVFDHSTNMVASCQREFSQMYPKPGWVEHDAMEIWASQSSTLIEALARADIHSEDVAAIGITNQRETTVIWDKATGKPVYNAIVWQCRRSKAICDELKTQGLEDYVKQATGLLLDPYFSGTKIKWILDNVDGVRERAEKGELLFGTIDTWLVWKLTEGQAHVTDPTNASRTMLFNIHTQEWDETLLKALNIPRSILPEVKPSSAVYGHTRIVGEGSHIAIAGMAGDQQAALFGQLCIEEGMAKNTYGTGCFLLMNTGTEAVQSQHGLLTTIAIGANGEVNYALEGSVFMGGATVQWLRDELGLIRDAQDTEYFASKVEDTHGVYLIPAFVGLGAPYWDPDARGALVGLTRGANRNHIIRAALEAIAYQSRDLLDAMAKDSRVELKQIKVDGGAVANDFLMQFQSDITNVEVQRPDLTETTAMGAAFLAGLAVGFWDSTDELKLKAGVERSFTPQITAQKRDSLYQGWQNAVARTR</sequence>
<name>GLPK_SHEHH</name>
<dbReference type="EC" id="2.7.1.30" evidence="1"/>
<dbReference type="EMBL" id="CP000931">
    <property type="protein sequence ID" value="ABZ75019.1"/>
    <property type="molecule type" value="Genomic_DNA"/>
</dbReference>
<dbReference type="RefSeq" id="WP_012275573.1">
    <property type="nucleotide sequence ID" value="NC_010334.1"/>
</dbReference>
<dbReference type="SMR" id="B0TQM6"/>
<dbReference type="STRING" id="458817.Shal_0444"/>
<dbReference type="KEGG" id="shl:Shal_0444"/>
<dbReference type="eggNOG" id="COG0554">
    <property type="taxonomic scope" value="Bacteria"/>
</dbReference>
<dbReference type="HOGENOM" id="CLU_009281_2_3_6"/>
<dbReference type="OrthoDB" id="9805576at2"/>
<dbReference type="UniPathway" id="UPA00618">
    <property type="reaction ID" value="UER00672"/>
</dbReference>
<dbReference type="Proteomes" id="UP000001317">
    <property type="component" value="Chromosome"/>
</dbReference>
<dbReference type="GO" id="GO:0005829">
    <property type="term" value="C:cytosol"/>
    <property type="evidence" value="ECO:0007669"/>
    <property type="project" value="TreeGrafter"/>
</dbReference>
<dbReference type="GO" id="GO:0005524">
    <property type="term" value="F:ATP binding"/>
    <property type="evidence" value="ECO:0007669"/>
    <property type="project" value="UniProtKB-UniRule"/>
</dbReference>
<dbReference type="GO" id="GO:0004370">
    <property type="term" value="F:glycerol kinase activity"/>
    <property type="evidence" value="ECO:0000250"/>
    <property type="project" value="UniProtKB"/>
</dbReference>
<dbReference type="GO" id="GO:0019563">
    <property type="term" value="P:glycerol catabolic process"/>
    <property type="evidence" value="ECO:0007669"/>
    <property type="project" value="UniProtKB-UniRule"/>
</dbReference>
<dbReference type="GO" id="GO:0006071">
    <property type="term" value="P:glycerol metabolic process"/>
    <property type="evidence" value="ECO:0000250"/>
    <property type="project" value="UniProtKB"/>
</dbReference>
<dbReference type="GO" id="GO:0006072">
    <property type="term" value="P:glycerol-3-phosphate metabolic process"/>
    <property type="evidence" value="ECO:0007669"/>
    <property type="project" value="InterPro"/>
</dbReference>
<dbReference type="CDD" id="cd07786">
    <property type="entry name" value="FGGY_EcGK_like"/>
    <property type="match status" value="1"/>
</dbReference>
<dbReference type="FunFam" id="3.30.420.40:FF:000007">
    <property type="entry name" value="Glycerol kinase"/>
    <property type="match status" value="1"/>
</dbReference>
<dbReference type="FunFam" id="3.30.420.40:FF:000008">
    <property type="entry name" value="Glycerol kinase"/>
    <property type="match status" value="1"/>
</dbReference>
<dbReference type="Gene3D" id="3.30.420.40">
    <property type="match status" value="2"/>
</dbReference>
<dbReference type="HAMAP" id="MF_00186">
    <property type="entry name" value="Glycerol_kin"/>
    <property type="match status" value="1"/>
</dbReference>
<dbReference type="InterPro" id="IPR043129">
    <property type="entry name" value="ATPase_NBD"/>
</dbReference>
<dbReference type="InterPro" id="IPR000577">
    <property type="entry name" value="Carb_kinase_FGGY"/>
</dbReference>
<dbReference type="InterPro" id="IPR018483">
    <property type="entry name" value="Carb_kinase_FGGY_CS"/>
</dbReference>
<dbReference type="InterPro" id="IPR018485">
    <property type="entry name" value="FGGY_C"/>
</dbReference>
<dbReference type="InterPro" id="IPR018484">
    <property type="entry name" value="FGGY_N"/>
</dbReference>
<dbReference type="InterPro" id="IPR005999">
    <property type="entry name" value="Glycerol_kin"/>
</dbReference>
<dbReference type="NCBIfam" id="TIGR01311">
    <property type="entry name" value="glycerol_kin"/>
    <property type="match status" value="1"/>
</dbReference>
<dbReference type="NCBIfam" id="NF000756">
    <property type="entry name" value="PRK00047.1"/>
    <property type="match status" value="1"/>
</dbReference>
<dbReference type="PANTHER" id="PTHR10196:SF69">
    <property type="entry name" value="GLYCEROL KINASE"/>
    <property type="match status" value="1"/>
</dbReference>
<dbReference type="PANTHER" id="PTHR10196">
    <property type="entry name" value="SUGAR KINASE"/>
    <property type="match status" value="1"/>
</dbReference>
<dbReference type="Pfam" id="PF02782">
    <property type="entry name" value="FGGY_C"/>
    <property type="match status" value="1"/>
</dbReference>
<dbReference type="Pfam" id="PF00370">
    <property type="entry name" value="FGGY_N"/>
    <property type="match status" value="1"/>
</dbReference>
<dbReference type="PIRSF" id="PIRSF000538">
    <property type="entry name" value="GlpK"/>
    <property type="match status" value="1"/>
</dbReference>
<dbReference type="SUPFAM" id="SSF53067">
    <property type="entry name" value="Actin-like ATPase domain"/>
    <property type="match status" value="2"/>
</dbReference>
<dbReference type="PROSITE" id="PS00933">
    <property type="entry name" value="FGGY_KINASES_1"/>
    <property type="match status" value="1"/>
</dbReference>
<dbReference type="PROSITE" id="PS00445">
    <property type="entry name" value="FGGY_KINASES_2"/>
    <property type="match status" value="1"/>
</dbReference>
<organism>
    <name type="scientific">Shewanella halifaxensis (strain HAW-EB4)</name>
    <dbReference type="NCBI Taxonomy" id="458817"/>
    <lineage>
        <taxon>Bacteria</taxon>
        <taxon>Pseudomonadati</taxon>
        <taxon>Pseudomonadota</taxon>
        <taxon>Gammaproteobacteria</taxon>
        <taxon>Alteromonadales</taxon>
        <taxon>Shewanellaceae</taxon>
        <taxon>Shewanella</taxon>
    </lineage>
</organism>
<evidence type="ECO:0000255" key="1">
    <source>
        <dbReference type="HAMAP-Rule" id="MF_00186"/>
    </source>
</evidence>
<reference key="1">
    <citation type="submission" date="2008-01" db="EMBL/GenBank/DDBJ databases">
        <title>Complete sequence of Shewanella halifaxensis HAW-EB4.</title>
        <authorList>
            <consortium name="US DOE Joint Genome Institute"/>
            <person name="Copeland A."/>
            <person name="Lucas S."/>
            <person name="Lapidus A."/>
            <person name="Glavina del Rio T."/>
            <person name="Dalin E."/>
            <person name="Tice H."/>
            <person name="Bruce D."/>
            <person name="Goodwin L."/>
            <person name="Pitluck S."/>
            <person name="Sims D."/>
            <person name="Brettin T."/>
            <person name="Detter J.C."/>
            <person name="Han C."/>
            <person name="Kuske C.R."/>
            <person name="Schmutz J."/>
            <person name="Larimer F."/>
            <person name="Land M."/>
            <person name="Hauser L."/>
            <person name="Kyrpides N."/>
            <person name="Kim E."/>
            <person name="Zhao J.-S."/>
            <person name="Richardson P."/>
        </authorList>
    </citation>
    <scope>NUCLEOTIDE SEQUENCE [LARGE SCALE GENOMIC DNA]</scope>
    <source>
        <strain>HAW-EB4</strain>
    </source>
</reference>
<accession>B0TQM6</accession>
<feature type="chain" id="PRO_1000077429" description="Glycerol kinase">
    <location>
        <begin position="1"/>
        <end position="493"/>
    </location>
</feature>
<feature type="binding site" evidence="1">
    <location>
        <position position="13"/>
    </location>
    <ligand>
        <name>ADP</name>
        <dbReference type="ChEBI" id="CHEBI:456216"/>
    </ligand>
</feature>
<feature type="binding site" evidence="1">
    <location>
        <position position="13"/>
    </location>
    <ligand>
        <name>ATP</name>
        <dbReference type="ChEBI" id="CHEBI:30616"/>
    </ligand>
</feature>
<feature type="binding site" evidence="1">
    <location>
        <position position="13"/>
    </location>
    <ligand>
        <name>sn-glycerol 3-phosphate</name>
        <dbReference type="ChEBI" id="CHEBI:57597"/>
    </ligand>
</feature>
<feature type="binding site" evidence="1">
    <location>
        <position position="14"/>
    </location>
    <ligand>
        <name>ATP</name>
        <dbReference type="ChEBI" id="CHEBI:30616"/>
    </ligand>
</feature>
<feature type="binding site" evidence="1">
    <location>
        <position position="15"/>
    </location>
    <ligand>
        <name>ATP</name>
        <dbReference type="ChEBI" id="CHEBI:30616"/>
    </ligand>
</feature>
<feature type="binding site" evidence="1">
    <location>
        <position position="17"/>
    </location>
    <ligand>
        <name>ADP</name>
        <dbReference type="ChEBI" id="CHEBI:456216"/>
    </ligand>
</feature>
<feature type="binding site" evidence="1">
    <location>
        <position position="83"/>
    </location>
    <ligand>
        <name>glycerol</name>
        <dbReference type="ChEBI" id="CHEBI:17754"/>
    </ligand>
</feature>
<feature type="binding site" evidence="1">
    <location>
        <position position="83"/>
    </location>
    <ligand>
        <name>sn-glycerol 3-phosphate</name>
        <dbReference type="ChEBI" id="CHEBI:57597"/>
    </ligand>
</feature>
<feature type="binding site" evidence="1">
    <location>
        <position position="84"/>
    </location>
    <ligand>
        <name>glycerol</name>
        <dbReference type="ChEBI" id="CHEBI:17754"/>
    </ligand>
</feature>
<feature type="binding site" evidence="1">
    <location>
        <position position="84"/>
    </location>
    <ligand>
        <name>sn-glycerol 3-phosphate</name>
        <dbReference type="ChEBI" id="CHEBI:57597"/>
    </ligand>
</feature>
<feature type="binding site" evidence="1">
    <location>
        <position position="135"/>
    </location>
    <ligand>
        <name>glycerol</name>
        <dbReference type="ChEBI" id="CHEBI:17754"/>
    </ligand>
</feature>
<feature type="binding site" evidence="1">
    <location>
        <position position="135"/>
    </location>
    <ligand>
        <name>sn-glycerol 3-phosphate</name>
        <dbReference type="ChEBI" id="CHEBI:57597"/>
    </ligand>
</feature>
<feature type="binding site" evidence="1">
    <location>
        <position position="244"/>
    </location>
    <ligand>
        <name>glycerol</name>
        <dbReference type="ChEBI" id="CHEBI:17754"/>
    </ligand>
</feature>
<feature type="binding site" evidence="1">
    <location>
        <position position="244"/>
    </location>
    <ligand>
        <name>sn-glycerol 3-phosphate</name>
        <dbReference type="ChEBI" id="CHEBI:57597"/>
    </ligand>
</feature>
<feature type="binding site" evidence="1">
    <location>
        <position position="245"/>
    </location>
    <ligand>
        <name>glycerol</name>
        <dbReference type="ChEBI" id="CHEBI:17754"/>
    </ligand>
</feature>
<feature type="binding site" evidence="1">
    <location>
        <position position="266"/>
    </location>
    <ligand>
        <name>ADP</name>
        <dbReference type="ChEBI" id="CHEBI:456216"/>
    </ligand>
</feature>
<feature type="binding site" evidence="1">
    <location>
        <position position="266"/>
    </location>
    <ligand>
        <name>ATP</name>
        <dbReference type="ChEBI" id="CHEBI:30616"/>
    </ligand>
</feature>
<feature type="binding site" evidence="1">
    <location>
        <position position="309"/>
    </location>
    <ligand>
        <name>ADP</name>
        <dbReference type="ChEBI" id="CHEBI:456216"/>
    </ligand>
</feature>
<feature type="binding site" evidence="1">
    <location>
        <position position="309"/>
    </location>
    <ligand>
        <name>ATP</name>
        <dbReference type="ChEBI" id="CHEBI:30616"/>
    </ligand>
</feature>
<feature type="binding site" evidence="1">
    <location>
        <position position="313"/>
    </location>
    <ligand>
        <name>ATP</name>
        <dbReference type="ChEBI" id="CHEBI:30616"/>
    </ligand>
</feature>
<feature type="binding site" evidence="1">
    <location>
        <position position="410"/>
    </location>
    <ligand>
        <name>ADP</name>
        <dbReference type="ChEBI" id="CHEBI:456216"/>
    </ligand>
</feature>
<feature type="binding site" evidence="1">
    <location>
        <position position="410"/>
    </location>
    <ligand>
        <name>ATP</name>
        <dbReference type="ChEBI" id="CHEBI:30616"/>
    </ligand>
</feature>
<feature type="binding site" evidence="1">
    <location>
        <position position="414"/>
    </location>
    <ligand>
        <name>ADP</name>
        <dbReference type="ChEBI" id="CHEBI:456216"/>
    </ligand>
</feature>
<comment type="function">
    <text evidence="1">Key enzyme in the regulation of glycerol uptake and metabolism. Catalyzes the phosphorylation of glycerol to yield sn-glycerol 3-phosphate.</text>
</comment>
<comment type="catalytic activity">
    <reaction evidence="1">
        <text>glycerol + ATP = sn-glycerol 3-phosphate + ADP + H(+)</text>
        <dbReference type="Rhea" id="RHEA:21644"/>
        <dbReference type="ChEBI" id="CHEBI:15378"/>
        <dbReference type="ChEBI" id="CHEBI:17754"/>
        <dbReference type="ChEBI" id="CHEBI:30616"/>
        <dbReference type="ChEBI" id="CHEBI:57597"/>
        <dbReference type="ChEBI" id="CHEBI:456216"/>
        <dbReference type="EC" id="2.7.1.30"/>
    </reaction>
</comment>
<comment type="activity regulation">
    <text evidence="1">Inhibited by fructose 1,6-bisphosphate (FBP).</text>
</comment>
<comment type="pathway">
    <text evidence="1">Polyol metabolism; glycerol degradation via glycerol kinase pathway; sn-glycerol 3-phosphate from glycerol: step 1/1.</text>
</comment>
<comment type="similarity">
    <text evidence="1">Belongs to the FGGY kinase family.</text>
</comment>
<keyword id="KW-0067">ATP-binding</keyword>
<keyword id="KW-0319">Glycerol metabolism</keyword>
<keyword id="KW-0418">Kinase</keyword>
<keyword id="KW-0547">Nucleotide-binding</keyword>
<keyword id="KW-0808">Transferase</keyword>